<protein>
    <recommendedName>
        <fullName evidence="1">Glycogen synthase</fullName>
        <ecNumber evidence="1">2.4.1.21</ecNumber>
    </recommendedName>
    <alternativeName>
        <fullName evidence="1">Starch [bacterial glycogen] synthase</fullName>
    </alternativeName>
</protein>
<gene>
    <name evidence="1" type="primary">glgA</name>
    <name type="ordered locus">Ecok1_34080</name>
    <name type="ORF">APECO1_3028</name>
</gene>
<dbReference type="EC" id="2.4.1.21" evidence="1"/>
<dbReference type="EMBL" id="CP000468">
    <property type="protein sequence ID" value="ABJ02902.1"/>
    <property type="molecule type" value="Genomic_DNA"/>
</dbReference>
<dbReference type="RefSeq" id="WP_001197646.1">
    <property type="nucleotide sequence ID" value="NZ_CADILS010000075.1"/>
</dbReference>
<dbReference type="SMR" id="A1AGW2"/>
<dbReference type="CAZy" id="GT5">
    <property type="family name" value="Glycosyltransferase Family 5"/>
</dbReference>
<dbReference type="GeneID" id="75202274"/>
<dbReference type="KEGG" id="ecv:APECO1_3028"/>
<dbReference type="HOGENOM" id="CLU_009583_18_2_6"/>
<dbReference type="UniPathway" id="UPA00164"/>
<dbReference type="Proteomes" id="UP000008216">
    <property type="component" value="Chromosome"/>
</dbReference>
<dbReference type="GO" id="GO:0005829">
    <property type="term" value="C:cytosol"/>
    <property type="evidence" value="ECO:0007669"/>
    <property type="project" value="TreeGrafter"/>
</dbReference>
<dbReference type="GO" id="GO:0009011">
    <property type="term" value="F:alpha-1,4-glucan glucosyltransferase (ADP-glucose donor) activity"/>
    <property type="evidence" value="ECO:0007669"/>
    <property type="project" value="UniProtKB-UniRule"/>
</dbReference>
<dbReference type="GO" id="GO:0004373">
    <property type="term" value="F:alpha-1,4-glucan glucosyltransferase (UDP-glucose donor) activity"/>
    <property type="evidence" value="ECO:0007669"/>
    <property type="project" value="InterPro"/>
</dbReference>
<dbReference type="GO" id="GO:0005978">
    <property type="term" value="P:glycogen biosynthetic process"/>
    <property type="evidence" value="ECO:0007669"/>
    <property type="project" value="UniProtKB-UniRule"/>
</dbReference>
<dbReference type="CDD" id="cd03791">
    <property type="entry name" value="GT5_Glycogen_synthase_DULL1-like"/>
    <property type="match status" value="1"/>
</dbReference>
<dbReference type="FunFam" id="3.40.50.2000:FF:000008">
    <property type="entry name" value="Glycogen synthase"/>
    <property type="match status" value="1"/>
</dbReference>
<dbReference type="FunFam" id="3.40.50.2000:FF:000011">
    <property type="entry name" value="Glycogen synthase"/>
    <property type="match status" value="1"/>
</dbReference>
<dbReference type="Gene3D" id="3.40.50.2000">
    <property type="entry name" value="Glycogen Phosphorylase B"/>
    <property type="match status" value="2"/>
</dbReference>
<dbReference type="HAMAP" id="MF_00484">
    <property type="entry name" value="Glycogen_synth"/>
    <property type="match status" value="1"/>
</dbReference>
<dbReference type="InterPro" id="IPR001296">
    <property type="entry name" value="Glyco_trans_1"/>
</dbReference>
<dbReference type="InterPro" id="IPR011835">
    <property type="entry name" value="GS/SS"/>
</dbReference>
<dbReference type="InterPro" id="IPR013534">
    <property type="entry name" value="Starch_synth_cat_dom"/>
</dbReference>
<dbReference type="NCBIfam" id="TIGR02095">
    <property type="entry name" value="glgA"/>
    <property type="match status" value="1"/>
</dbReference>
<dbReference type="NCBIfam" id="NF001899">
    <property type="entry name" value="PRK00654.1-2"/>
    <property type="match status" value="1"/>
</dbReference>
<dbReference type="PANTHER" id="PTHR45825:SF11">
    <property type="entry name" value="ALPHA AMYLASE DOMAIN-CONTAINING PROTEIN"/>
    <property type="match status" value="1"/>
</dbReference>
<dbReference type="PANTHER" id="PTHR45825">
    <property type="entry name" value="GRANULE-BOUND STARCH SYNTHASE 1, CHLOROPLASTIC/AMYLOPLASTIC"/>
    <property type="match status" value="1"/>
</dbReference>
<dbReference type="Pfam" id="PF08323">
    <property type="entry name" value="Glyco_transf_5"/>
    <property type="match status" value="1"/>
</dbReference>
<dbReference type="Pfam" id="PF00534">
    <property type="entry name" value="Glycos_transf_1"/>
    <property type="match status" value="1"/>
</dbReference>
<dbReference type="SUPFAM" id="SSF53756">
    <property type="entry name" value="UDP-Glycosyltransferase/glycogen phosphorylase"/>
    <property type="match status" value="1"/>
</dbReference>
<proteinExistence type="inferred from homology"/>
<keyword id="KW-0320">Glycogen biosynthesis</keyword>
<keyword id="KW-0328">Glycosyltransferase</keyword>
<keyword id="KW-1185">Reference proteome</keyword>
<keyword id="KW-0808">Transferase</keyword>
<evidence type="ECO:0000255" key="1">
    <source>
        <dbReference type="HAMAP-Rule" id="MF_00484"/>
    </source>
</evidence>
<comment type="function">
    <text evidence="1">Synthesizes alpha-1,4-glucan chains using ADP-glucose.</text>
</comment>
<comment type="catalytic activity">
    <reaction evidence="1">
        <text>[(1-&gt;4)-alpha-D-glucosyl](n) + ADP-alpha-D-glucose = [(1-&gt;4)-alpha-D-glucosyl](n+1) + ADP + H(+)</text>
        <dbReference type="Rhea" id="RHEA:18189"/>
        <dbReference type="Rhea" id="RHEA-COMP:9584"/>
        <dbReference type="Rhea" id="RHEA-COMP:9587"/>
        <dbReference type="ChEBI" id="CHEBI:15378"/>
        <dbReference type="ChEBI" id="CHEBI:15444"/>
        <dbReference type="ChEBI" id="CHEBI:57498"/>
        <dbReference type="ChEBI" id="CHEBI:456216"/>
        <dbReference type="EC" id="2.4.1.21"/>
    </reaction>
</comment>
<comment type="pathway">
    <text evidence="1">Glycan biosynthesis; glycogen biosynthesis.</text>
</comment>
<comment type="similarity">
    <text evidence="1">Belongs to the glycosyltransferase 1 family. Bacterial/plant glycogen synthase subfamily.</text>
</comment>
<sequence>MQVLHVCSEMFPLLKTGGLADVIGALPAAQIADGVDARVLLPAFPDIRRGVTDAQVVSRRDTFAGHITLLFGHYNGVGIYLIDAPHLYDRPGSPYHDTNLFAYTDNVLRFALLGWVGAEMASGLDPFWRPDVVHAHDWHAGLAPAYLAARGRPAKSVFTVHNLAYQGMFYAHHMNDIQLPWSFFNIHGLEFNGQISFLKAGLYYADHITAVSPTYAREITEPQFAYGMEGLLQQRHREGRLSGVLNGVDEKIWSPETDLLLASRYTRDTLEDKAENKRQLQIAMGLKVDDKVPLFAVVSRLTSQKGLDLVLEALPGLLEQGGQLALLGAGDPVLQEGFLAAAAEYPGQVGVQIGYHEAFSHRIMGGADVILVPSRFEPCGLTQLYGLKYGTLPLVRRTGGLADTVSDCSLENLADGVASGFVFEDSNAWSLLRAIRRAFVLWSRPSLWRFVQRQAMAMDFSWQVAAKSYRELYYRLK</sequence>
<accession>A1AGW2</accession>
<name>GLGA_ECOK1</name>
<reference key="1">
    <citation type="journal article" date="2007" name="J. Bacteriol.">
        <title>The genome sequence of avian pathogenic Escherichia coli strain O1:K1:H7 shares strong similarities with human extraintestinal pathogenic E. coli genomes.</title>
        <authorList>
            <person name="Johnson T.J."/>
            <person name="Kariyawasam S."/>
            <person name="Wannemuehler Y."/>
            <person name="Mangiamele P."/>
            <person name="Johnson S.J."/>
            <person name="Doetkott C."/>
            <person name="Skyberg J.A."/>
            <person name="Lynne A.M."/>
            <person name="Johnson J.R."/>
            <person name="Nolan L.K."/>
        </authorList>
    </citation>
    <scope>NUCLEOTIDE SEQUENCE [LARGE SCALE GENOMIC DNA]</scope>
</reference>
<organism>
    <name type="scientific">Escherichia coli O1:K1 / APEC</name>
    <dbReference type="NCBI Taxonomy" id="405955"/>
    <lineage>
        <taxon>Bacteria</taxon>
        <taxon>Pseudomonadati</taxon>
        <taxon>Pseudomonadota</taxon>
        <taxon>Gammaproteobacteria</taxon>
        <taxon>Enterobacterales</taxon>
        <taxon>Enterobacteriaceae</taxon>
        <taxon>Escherichia</taxon>
    </lineage>
</organism>
<feature type="chain" id="PRO_1000014351" description="Glycogen synthase">
    <location>
        <begin position="1"/>
        <end position="477"/>
    </location>
</feature>
<feature type="binding site" evidence="1">
    <location>
        <position position="15"/>
    </location>
    <ligand>
        <name>ADP-alpha-D-glucose</name>
        <dbReference type="ChEBI" id="CHEBI:57498"/>
    </ligand>
</feature>